<keyword id="KW-0175">Coiled coil</keyword>
<keyword id="KW-1185">Reference proteome</keyword>
<organism>
    <name type="scientific">Saccharomyces cerevisiae (strain ATCC 204508 / S288c)</name>
    <name type="common">Baker's yeast</name>
    <dbReference type="NCBI Taxonomy" id="559292"/>
    <lineage>
        <taxon>Eukaryota</taxon>
        <taxon>Fungi</taxon>
        <taxon>Dikarya</taxon>
        <taxon>Ascomycota</taxon>
        <taxon>Saccharomycotina</taxon>
        <taxon>Saccharomycetes</taxon>
        <taxon>Saccharomycetales</taxon>
        <taxon>Saccharomycetaceae</taxon>
        <taxon>Saccharomyces</taxon>
    </lineage>
</organism>
<evidence type="ECO:0000255" key="1"/>
<evidence type="ECO:0000305" key="2"/>
<evidence type="ECO:0000312" key="3">
    <source>
        <dbReference type="SGD" id="S000113566"/>
    </source>
</evidence>
<name>YL146_YEAST</name>
<feature type="chain" id="PRO_0000262874" description="Coiled-coil domain-containing protein YLR146W-A">
    <location>
        <begin position="1"/>
        <end position="62"/>
    </location>
</feature>
<feature type="coiled-coil region" evidence="1">
    <location>
        <begin position="14"/>
        <end position="49"/>
    </location>
</feature>
<reference key="1">
    <citation type="journal article" date="1997" name="Nature">
        <title>The nucleotide sequence of Saccharomyces cerevisiae chromosome XII.</title>
        <authorList>
            <person name="Johnston M."/>
            <person name="Hillier L.W."/>
            <person name="Riles L."/>
            <person name="Albermann K."/>
            <person name="Andre B."/>
            <person name="Ansorge W."/>
            <person name="Benes V."/>
            <person name="Brueckner M."/>
            <person name="Delius H."/>
            <person name="Dubois E."/>
            <person name="Duesterhoeft A."/>
            <person name="Entian K.-D."/>
            <person name="Floeth M."/>
            <person name="Goffeau A."/>
            <person name="Hebling U."/>
            <person name="Heumann K."/>
            <person name="Heuss-Neitzel D."/>
            <person name="Hilbert H."/>
            <person name="Hilger F."/>
            <person name="Kleine K."/>
            <person name="Koetter P."/>
            <person name="Louis E.J."/>
            <person name="Messenguy F."/>
            <person name="Mewes H.-W."/>
            <person name="Miosga T."/>
            <person name="Moestl D."/>
            <person name="Mueller-Auer S."/>
            <person name="Nentwich U."/>
            <person name="Obermaier B."/>
            <person name="Piravandi E."/>
            <person name="Pohl T.M."/>
            <person name="Portetelle D."/>
            <person name="Purnelle B."/>
            <person name="Rechmann S."/>
            <person name="Rieger M."/>
            <person name="Rinke M."/>
            <person name="Rose M."/>
            <person name="Scharfe M."/>
            <person name="Scherens B."/>
            <person name="Scholler P."/>
            <person name="Schwager C."/>
            <person name="Schwarz S."/>
            <person name="Underwood A.P."/>
            <person name="Urrestarazu L.A."/>
            <person name="Vandenbol M."/>
            <person name="Verhasselt P."/>
            <person name="Vierendeels F."/>
            <person name="Voet M."/>
            <person name="Volckaert G."/>
            <person name="Voss H."/>
            <person name="Wambutt R."/>
            <person name="Wedler E."/>
            <person name="Wedler H."/>
            <person name="Zimmermann F.K."/>
            <person name="Zollner A."/>
            <person name="Hani J."/>
            <person name="Hoheisel J.D."/>
        </authorList>
    </citation>
    <scope>NUCLEOTIDE SEQUENCE [LARGE SCALE GENOMIC DNA]</scope>
    <source>
        <strain>ATCC 204508 / S288c</strain>
    </source>
</reference>
<reference key="2">
    <citation type="journal article" date="2014" name="G3 (Bethesda)">
        <title>The reference genome sequence of Saccharomyces cerevisiae: Then and now.</title>
        <authorList>
            <person name="Engel S.R."/>
            <person name="Dietrich F.S."/>
            <person name="Fisk D.G."/>
            <person name="Binkley G."/>
            <person name="Balakrishnan R."/>
            <person name="Costanzo M.C."/>
            <person name="Dwight S.S."/>
            <person name="Hitz B.C."/>
            <person name="Karra K."/>
            <person name="Nash R.S."/>
            <person name="Weng S."/>
            <person name="Wong E.D."/>
            <person name="Lloyd P."/>
            <person name="Skrzypek M.S."/>
            <person name="Miyasato S.R."/>
            <person name="Simison M."/>
            <person name="Cherry J.M."/>
        </authorList>
    </citation>
    <scope>GENOME REANNOTATION</scope>
    <source>
        <strain>ATCC 204508 / S288c</strain>
    </source>
</reference>
<reference key="3">
    <citation type="journal article" date="2003" name="Science">
        <title>Finding functional features in Saccharomyces genomes by phylogenetic footprinting.</title>
        <authorList>
            <person name="Cliften P.F."/>
            <person name="Sudarsanam P."/>
            <person name="Desikan A."/>
            <person name="Fulton L."/>
            <person name="Fulton B."/>
            <person name="Majors J."/>
            <person name="Waterston R."/>
            <person name="Cohen B.A."/>
            <person name="Johnston M."/>
        </authorList>
    </citation>
    <scope>GENOME REANNOTATION</scope>
</reference>
<reference key="4">
    <citation type="journal article" date="2018" name="J. Proteome Res.">
        <title>Enrichment-based proteogenomics identifies microproteins, missing proteins, and novel smORFs in Saccharomyces cerevisiae.</title>
        <authorList>
            <person name="He C."/>
            <person name="Jia C."/>
            <person name="Zhang Y."/>
            <person name="Xu P."/>
        </authorList>
    </citation>
    <scope>IDENTIFICATION BY MASS SPECTROMETRY</scope>
</reference>
<sequence>MDTEEKKKTTASVEHARMLQNEIQQLFAQLRDTNSQIRCDLNEFEQIKESSTTADSTTNSAN</sequence>
<proteinExistence type="evidence at protein level"/>
<dbReference type="EMBL" id="U53879">
    <property type="status" value="NOT_ANNOTATED_CDS"/>
    <property type="molecule type" value="Genomic_DNA"/>
</dbReference>
<dbReference type="EMBL" id="Z73318">
    <property type="status" value="NOT_ANNOTATED_CDS"/>
    <property type="molecule type" value="Genomic_DNA"/>
</dbReference>
<dbReference type="EMBL" id="Z73319">
    <property type="status" value="NOT_ANNOTATED_CDS"/>
    <property type="molecule type" value="Genomic_DNA"/>
</dbReference>
<dbReference type="EMBL" id="BK006945">
    <property type="protein sequence ID" value="DAA09457.1"/>
    <property type="molecule type" value="Genomic_DNA"/>
</dbReference>
<dbReference type="RefSeq" id="NP_001032582.1">
    <property type="nucleotide sequence ID" value="NM_001184685.1"/>
</dbReference>
<dbReference type="SMR" id="Q2V2P1"/>
<dbReference type="BioGRID" id="531948">
    <property type="interactions" value="4"/>
</dbReference>
<dbReference type="FunCoup" id="Q2V2P1">
    <property type="interactions" value="24"/>
</dbReference>
<dbReference type="IntAct" id="Q2V2P1">
    <property type="interactions" value="1"/>
</dbReference>
<dbReference type="STRING" id="4932.YLR146W-A"/>
<dbReference type="iPTMnet" id="Q2V2P1"/>
<dbReference type="PaxDb" id="4932-YLR146W-A"/>
<dbReference type="PeptideAtlas" id="Q2V2P1"/>
<dbReference type="EnsemblFungi" id="YLR146W-A_mRNA">
    <property type="protein sequence ID" value="YLR146W-A"/>
    <property type="gene ID" value="YLR146W-A"/>
</dbReference>
<dbReference type="GeneID" id="3799977"/>
<dbReference type="KEGG" id="sce:YLR146W-A"/>
<dbReference type="AGR" id="SGD:S000113566"/>
<dbReference type="SGD" id="S000113566">
    <property type="gene designation" value="YLR146W-A"/>
</dbReference>
<dbReference type="VEuPathDB" id="FungiDB:YLR146W-A"/>
<dbReference type="HOGENOM" id="CLU_2905884_0_0_1"/>
<dbReference type="InParanoid" id="Q2V2P1"/>
<dbReference type="OrthoDB" id="4062053at2759"/>
<dbReference type="BioCyc" id="YEAST:G3O-32606-MONOMER"/>
<dbReference type="BioGRID-ORCS" id="3799977">
    <property type="hits" value="0 hits in 10 CRISPR screens"/>
</dbReference>
<dbReference type="PRO" id="PR:Q2V2P1"/>
<dbReference type="Proteomes" id="UP000002311">
    <property type="component" value="Chromosome XII"/>
</dbReference>
<dbReference type="RNAct" id="Q2V2P1">
    <property type="molecule type" value="protein"/>
</dbReference>
<dbReference type="Pfam" id="PF23482">
    <property type="entry name" value="YLR146W-A"/>
    <property type="match status" value="1"/>
</dbReference>
<protein>
    <recommendedName>
        <fullName evidence="2">Coiled-coil domain-containing protein YLR146W-A</fullName>
    </recommendedName>
</protein>
<accession>Q2V2P1</accession>
<accession>D6VYE1</accession>
<gene>
    <name evidence="3" type="ordered locus">YLR146W-A</name>
</gene>